<dbReference type="EMBL" id="CP001205">
    <property type="protein sequence ID" value="ACK75016.1"/>
    <property type="molecule type" value="Genomic_DNA"/>
</dbReference>
<dbReference type="RefSeq" id="WP_002557290.1">
    <property type="nucleotide sequence ID" value="NC_011728.1"/>
</dbReference>
<dbReference type="SMR" id="B7J0F0"/>
<dbReference type="GeneID" id="83866182"/>
<dbReference type="KEGG" id="bbz:BbuZS7_0724"/>
<dbReference type="HOGENOM" id="CLU_129084_1_0_12"/>
<dbReference type="Proteomes" id="UP000006901">
    <property type="component" value="Chromosome"/>
</dbReference>
<dbReference type="GO" id="GO:0015934">
    <property type="term" value="C:large ribosomal subunit"/>
    <property type="evidence" value="ECO:0007669"/>
    <property type="project" value="InterPro"/>
</dbReference>
<dbReference type="GO" id="GO:0003735">
    <property type="term" value="F:structural constituent of ribosome"/>
    <property type="evidence" value="ECO:0007669"/>
    <property type="project" value="InterPro"/>
</dbReference>
<dbReference type="GO" id="GO:0006412">
    <property type="term" value="P:translation"/>
    <property type="evidence" value="ECO:0007669"/>
    <property type="project" value="UniProtKB-UniRule"/>
</dbReference>
<dbReference type="HAMAP" id="MF_00340">
    <property type="entry name" value="Ribosomal_bL32"/>
    <property type="match status" value="1"/>
</dbReference>
<dbReference type="InterPro" id="IPR002677">
    <property type="entry name" value="Ribosomal_bL32"/>
</dbReference>
<dbReference type="InterPro" id="IPR044957">
    <property type="entry name" value="Ribosomal_bL32_bact"/>
</dbReference>
<dbReference type="InterPro" id="IPR011332">
    <property type="entry name" value="Ribosomal_zn-bd"/>
</dbReference>
<dbReference type="NCBIfam" id="TIGR01031">
    <property type="entry name" value="rpmF_bact"/>
    <property type="match status" value="1"/>
</dbReference>
<dbReference type="PANTHER" id="PTHR35534">
    <property type="entry name" value="50S RIBOSOMAL PROTEIN L32"/>
    <property type="match status" value="1"/>
</dbReference>
<dbReference type="PANTHER" id="PTHR35534:SF1">
    <property type="entry name" value="LARGE RIBOSOMAL SUBUNIT PROTEIN BL32"/>
    <property type="match status" value="1"/>
</dbReference>
<dbReference type="Pfam" id="PF01783">
    <property type="entry name" value="Ribosomal_L32p"/>
    <property type="match status" value="1"/>
</dbReference>
<dbReference type="SUPFAM" id="SSF57829">
    <property type="entry name" value="Zn-binding ribosomal proteins"/>
    <property type="match status" value="1"/>
</dbReference>
<organism>
    <name type="scientific">Borreliella burgdorferi (strain ZS7)</name>
    <name type="common">Borrelia burgdorferi</name>
    <dbReference type="NCBI Taxonomy" id="445985"/>
    <lineage>
        <taxon>Bacteria</taxon>
        <taxon>Pseudomonadati</taxon>
        <taxon>Spirochaetota</taxon>
        <taxon>Spirochaetia</taxon>
        <taxon>Spirochaetales</taxon>
        <taxon>Borreliaceae</taxon>
        <taxon>Borreliella</taxon>
    </lineage>
</organism>
<sequence>MAVPKFKPSKSRSRTRRSINMRKKIPQFQECSNCGNLGVRHRICLKCGYYRNNQYLEIGL</sequence>
<feature type="chain" id="PRO_1000120091" description="Large ribosomal subunit protein bL32">
    <location>
        <begin position="1"/>
        <end position="60"/>
    </location>
</feature>
<comment type="similarity">
    <text evidence="1">Belongs to the bacterial ribosomal protein bL32 family.</text>
</comment>
<reference key="1">
    <citation type="journal article" date="2011" name="J. Bacteriol.">
        <title>Whole-genome sequences of thirteen isolates of Borrelia burgdorferi.</title>
        <authorList>
            <person name="Schutzer S.E."/>
            <person name="Fraser-Liggett C.M."/>
            <person name="Casjens S.R."/>
            <person name="Qiu W.G."/>
            <person name="Dunn J.J."/>
            <person name="Mongodin E.F."/>
            <person name="Luft B.J."/>
        </authorList>
    </citation>
    <scope>NUCLEOTIDE SEQUENCE [LARGE SCALE GENOMIC DNA]</scope>
    <source>
        <strain>ZS7</strain>
    </source>
</reference>
<evidence type="ECO:0000255" key="1">
    <source>
        <dbReference type="HAMAP-Rule" id="MF_00340"/>
    </source>
</evidence>
<evidence type="ECO:0000305" key="2"/>
<accession>B7J0F0</accession>
<proteinExistence type="inferred from homology"/>
<gene>
    <name evidence="1" type="primary">rpmF</name>
    <name type="ordered locus">BbuZS7_0724</name>
</gene>
<protein>
    <recommendedName>
        <fullName evidence="1">Large ribosomal subunit protein bL32</fullName>
    </recommendedName>
    <alternativeName>
        <fullName evidence="2">50S ribosomal protein L32</fullName>
    </alternativeName>
</protein>
<keyword id="KW-0687">Ribonucleoprotein</keyword>
<keyword id="KW-0689">Ribosomal protein</keyword>
<name>RL32_BORBZ</name>